<gene>
    <name evidence="1" type="primary">psd</name>
    <name type="ordered locus">Maqu_2780</name>
</gene>
<protein>
    <recommendedName>
        <fullName evidence="1">Phosphatidylserine decarboxylase proenzyme</fullName>
        <ecNumber evidence="1">4.1.1.65</ecNumber>
    </recommendedName>
    <component>
        <recommendedName>
            <fullName evidence="1">Phosphatidylserine decarboxylase alpha chain</fullName>
        </recommendedName>
    </component>
    <component>
        <recommendedName>
            <fullName evidence="1">Phosphatidylserine decarboxylase beta chain</fullName>
        </recommendedName>
    </component>
</protein>
<organism>
    <name type="scientific">Marinobacter nauticus (strain ATCC 700491 / DSM 11845 / VT8)</name>
    <name type="common">Marinobacter aquaeolei</name>
    <dbReference type="NCBI Taxonomy" id="351348"/>
    <lineage>
        <taxon>Bacteria</taxon>
        <taxon>Pseudomonadati</taxon>
        <taxon>Pseudomonadota</taxon>
        <taxon>Gammaproteobacteria</taxon>
        <taxon>Pseudomonadales</taxon>
        <taxon>Marinobacteraceae</taxon>
        <taxon>Marinobacter</taxon>
    </lineage>
</organism>
<evidence type="ECO:0000255" key="1">
    <source>
        <dbReference type="HAMAP-Rule" id="MF_00662"/>
    </source>
</evidence>
<dbReference type="EC" id="4.1.1.65" evidence="1"/>
<dbReference type="EMBL" id="CP000514">
    <property type="protein sequence ID" value="ABM19855.1"/>
    <property type="molecule type" value="Genomic_DNA"/>
</dbReference>
<dbReference type="SMR" id="A1U4D6"/>
<dbReference type="STRING" id="351348.Maqu_2780"/>
<dbReference type="KEGG" id="maq:Maqu_2780"/>
<dbReference type="eggNOG" id="COG0688">
    <property type="taxonomic scope" value="Bacteria"/>
</dbReference>
<dbReference type="HOGENOM" id="CLU_029061_4_1_6"/>
<dbReference type="OrthoDB" id="9802030at2"/>
<dbReference type="UniPathway" id="UPA00558">
    <property type="reaction ID" value="UER00616"/>
</dbReference>
<dbReference type="Proteomes" id="UP000000998">
    <property type="component" value="Chromosome"/>
</dbReference>
<dbReference type="GO" id="GO:0005886">
    <property type="term" value="C:plasma membrane"/>
    <property type="evidence" value="ECO:0007669"/>
    <property type="project" value="UniProtKB-SubCell"/>
</dbReference>
<dbReference type="GO" id="GO:0004609">
    <property type="term" value="F:phosphatidylserine decarboxylase activity"/>
    <property type="evidence" value="ECO:0007669"/>
    <property type="project" value="UniProtKB-UniRule"/>
</dbReference>
<dbReference type="GO" id="GO:0006646">
    <property type="term" value="P:phosphatidylethanolamine biosynthetic process"/>
    <property type="evidence" value="ECO:0007669"/>
    <property type="project" value="UniProtKB-UniRule"/>
</dbReference>
<dbReference type="HAMAP" id="MF_00662">
    <property type="entry name" value="PS_decarb_PSD_B_type1"/>
    <property type="match status" value="1"/>
</dbReference>
<dbReference type="InterPro" id="IPR003817">
    <property type="entry name" value="PS_Dcarbxylase"/>
</dbReference>
<dbReference type="InterPro" id="IPR033177">
    <property type="entry name" value="PSD-B"/>
</dbReference>
<dbReference type="InterPro" id="IPR033178">
    <property type="entry name" value="PSD_type1_pro"/>
</dbReference>
<dbReference type="NCBIfam" id="TIGR00163">
    <property type="entry name" value="PS_decarb"/>
    <property type="match status" value="1"/>
</dbReference>
<dbReference type="PANTHER" id="PTHR10067">
    <property type="entry name" value="PHOSPHATIDYLSERINE DECARBOXYLASE"/>
    <property type="match status" value="1"/>
</dbReference>
<dbReference type="PANTHER" id="PTHR10067:SF6">
    <property type="entry name" value="PHOSPHATIDYLSERINE DECARBOXYLASE PROENZYME, MITOCHONDRIAL"/>
    <property type="match status" value="1"/>
</dbReference>
<dbReference type="Pfam" id="PF02666">
    <property type="entry name" value="PS_Dcarbxylase"/>
    <property type="match status" value="1"/>
</dbReference>
<reference key="1">
    <citation type="journal article" date="2011" name="Appl. Environ. Microbiol.">
        <title>Genomic potential of Marinobacter aquaeolei, a biogeochemical 'opportunitroph'.</title>
        <authorList>
            <person name="Singer E."/>
            <person name="Webb E.A."/>
            <person name="Nelson W.C."/>
            <person name="Heidelberg J.F."/>
            <person name="Ivanova N."/>
            <person name="Pati A."/>
            <person name="Edwards K.J."/>
        </authorList>
    </citation>
    <scope>NUCLEOTIDE SEQUENCE [LARGE SCALE GENOMIC DNA]</scope>
    <source>
        <strain>ATCC 700491 / DSM 11845 / VT8</strain>
    </source>
</reference>
<keyword id="KW-1003">Cell membrane</keyword>
<keyword id="KW-0210">Decarboxylase</keyword>
<keyword id="KW-0444">Lipid biosynthesis</keyword>
<keyword id="KW-0443">Lipid metabolism</keyword>
<keyword id="KW-0456">Lyase</keyword>
<keyword id="KW-0472">Membrane</keyword>
<keyword id="KW-0594">Phospholipid biosynthesis</keyword>
<keyword id="KW-1208">Phospholipid metabolism</keyword>
<keyword id="KW-0670">Pyruvate</keyword>
<keyword id="KW-0865">Zymogen</keyword>
<name>PSD_MARN8</name>
<comment type="function">
    <text evidence="1">Catalyzes the formation of phosphatidylethanolamine (PtdEtn) from phosphatidylserine (PtdSer).</text>
</comment>
<comment type="catalytic activity">
    <reaction evidence="1">
        <text>a 1,2-diacyl-sn-glycero-3-phospho-L-serine + H(+) = a 1,2-diacyl-sn-glycero-3-phosphoethanolamine + CO2</text>
        <dbReference type="Rhea" id="RHEA:20828"/>
        <dbReference type="ChEBI" id="CHEBI:15378"/>
        <dbReference type="ChEBI" id="CHEBI:16526"/>
        <dbReference type="ChEBI" id="CHEBI:57262"/>
        <dbReference type="ChEBI" id="CHEBI:64612"/>
        <dbReference type="EC" id="4.1.1.65"/>
    </reaction>
</comment>
<comment type="cofactor">
    <cofactor evidence="1">
        <name>pyruvate</name>
        <dbReference type="ChEBI" id="CHEBI:15361"/>
    </cofactor>
    <text evidence="1">Binds 1 pyruvoyl group covalently per subunit.</text>
</comment>
<comment type="pathway">
    <text evidence="1">Phospholipid metabolism; phosphatidylethanolamine biosynthesis; phosphatidylethanolamine from CDP-diacylglycerol: step 2/2.</text>
</comment>
<comment type="subunit">
    <text evidence="1">Heterodimer of a large membrane-associated beta subunit and a small pyruvoyl-containing alpha subunit.</text>
</comment>
<comment type="subcellular location">
    <subcellularLocation>
        <location evidence="1">Cell membrane</location>
        <topology evidence="1">Peripheral membrane protein</topology>
    </subcellularLocation>
</comment>
<comment type="PTM">
    <text evidence="1">Is synthesized initially as an inactive proenzyme. Formation of the active enzyme involves a self-maturation process in which the active site pyruvoyl group is generated from an internal serine residue via an autocatalytic post-translational modification. Two non-identical subunits are generated from the proenzyme in this reaction, and the pyruvate is formed at the N-terminus of the alpha chain, which is derived from the carboxyl end of the proenzyme. The autoendoproteolytic cleavage occurs by a canonical serine protease mechanism, in which the side chain hydroxyl group of the serine supplies its oxygen atom to form the C-terminus of the beta chain, while the remainder of the serine residue undergoes an oxidative deamination to produce ammonia and the pyruvoyl prosthetic group on the alpha chain. During this reaction, the Ser that is part of the protease active site of the proenzyme becomes the pyruvoyl prosthetic group, which constitutes an essential element of the active site of the mature decarboxylase.</text>
</comment>
<comment type="similarity">
    <text evidence="1">Belongs to the phosphatidylserine decarboxylase family. PSD-B subfamily. Prokaryotic type I sub-subfamily.</text>
</comment>
<feature type="chain" id="PRO_1000026558" description="Phosphatidylserine decarboxylase beta chain" evidence="1">
    <location>
        <begin position="1"/>
        <end position="250"/>
    </location>
</feature>
<feature type="chain" id="PRO_1000026559" description="Phosphatidylserine decarboxylase alpha chain" evidence="1">
    <location>
        <begin position="251"/>
        <end position="286"/>
    </location>
</feature>
<feature type="active site" description="Charge relay system; for autoendoproteolytic cleavage activity" evidence="1">
    <location>
        <position position="91"/>
    </location>
</feature>
<feature type="active site" description="Charge relay system; for autoendoproteolytic cleavage activity" evidence="1">
    <location>
        <position position="148"/>
    </location>
</feature>
<feature type="active site" description="Charge relay system; for autoendoproteolytic cleavage activity" evidence="1">
    <location>
        <position position="251"/>
    </location>
</feature>
<feature type="active site" description="Schiff-base intermediate with substrate; via pyruvic acid; for decarboxylase activity" evidence="1">
    <location>
        <position position="251"/>
    </location>
</feature>
<feature type="site" description="Cleavage (non-hydrolytic); by autocatalysis" evidence="1">
    <location>
        <begin position="250"/>
        <end position="251"/>
    </location>
</feature>
<feature type="modified residue" description="Pyruvic acid (Ser); by autocatalysis" evidence="1">
    <location>
        <position position="251"/>
    </location>
</feature>
<accession>A1U4D6</accession>
<sequence length="286" mass="31345">MLDKLFVLSQYVTPQLAVSRLAGRLADSESTPALKNRVIKWFIGRYGVNMSEAAEPDFTAYPTFNAFFTRALKPGARTIDPAPETLTSPVDGAISQIGQISTDRVFQAKGQSFSLTELLGGDDERAEPFREGEFATIYLSPKDYHRIHMPMAGTLKEMVYVPGKLFSVNPVTAENVPNLFARNERVACLFDTEAGPMAMVLVGAMIVGSVETTWAGVVAPNSGKVTQWQYRGDDAVQFEKGQEMGRFRLGSTVVLVMPKGAVKWQPNQVAEKTVQLGEAFGKLNVK</sequence>
<proteinExistence type="inferred from homology"/>